<reference key="1">
    <citation type="journal article" date="2000" name="Nucleic Acids Res.">
        <title>Complete genome sequence of the alkaliphilic bacterium Bacillus halodurans and genomic sequence comparison with Bacillus subtilis.</title>
        <authorList>
            <person name="Takami H."/>
            <person name="Nakasone K."/>
            <person name="Takaki Y."/>
            <person name="Maeno G."/>
            <person name="Sasaki R."/>
            <person name="Masui N."/>
            <person name="Fuji F."/>
            <person name="Hirama C."/>
            <person name="Nakamura Y."/>
            <person name="Ogasawara N."/>
            <person name="Kuhara S."/>
            <person name="Horikoshi K."/>
        </authorList>
    </citation>
    <scope>NUCLEOTIDE SEQUENCE [LARGE SCALE GENOMIC DNA]</scope>
    <source>
        <strain>ATCC BAA-125 / DSM 18197 / FERM 7344 / JCM 9153 / C-125</strain>
    </source>
</reference>
<comment type="function">
    <text evidence="1">May act as an export chaperone for the filament capping protein FliD.</text>
</comment>
<comment type="subunit">
    <text evidence="1">Homodimer.</text>
</comment>
<comment type="subcellular location">
    <subcellularLocation>
        <location evidence="1">Cytoplasm</location>
        <location evidence="1">Cytosol</location>
    </subcellularLocation>
</comment>
<comment type="similarity">
    <text evidence="2">Belongs to the bacillales FliT family.</text>
</comment>
<keyword id="KW-1005">Bacterial flagellum biogenesis</keyword>
<keyword id="KW-0143">Chaperone</keyword>
<keyword id="KW-0963">Cytoplasm</keyword>
<keyword id="KW-1185">Reference proteome</keyword>
<name>FLIT_HALH5</name>
<protein>
    <recommendedName>
        <fullName>Flagellar protein FliT</fullName>
    </recommendedName>
</protein>
<dbReference type="EMBL" id="BA000004">
    <property type="protein sequence ID" value="BAB07331.1"/>
    <property type="molecule type" value="Genomic_DNA"/>
</dbReference>
<dbReference type="PIR" id="D84101">
    <property type="entry name" value="D84101"/>
</dbReference>
<dbReference type="RefSeq" id="WP_010899740.1">
    <property type="nucleotide sequence ID" value="NC_002570.2"/>
</dbReference>
<dbReference type="SMR" id="Q9K6W2"/>
<dbReference type="STRING" id="272558.gene:10729525"/>
<dbReference type="KEGG" id="bha:BH3612"/>
<dbReference type="HOGENOM" id="CLU_165941_0_0_9"/>
<dbReference type="OrthoDB" id="2353131at2"/>
<dbReference type="Proteomes" id="UP000001258">
    <property type="component" value="Chromosome"/>
</dbReference>
<dbReference type="GO" id="GO:0005829">
    <property type="term" value="C:cytosol"/>
    <property type="evidence" value="ECO:0007669"/>
    <property type="project" value="UniProtKB-SubCell"/>
</dbReference>
<dbReference type="GO" id="GO:0044781">
    <property type="term" value="P:bacterial-type flagellum organization"/>
    <property type="evidence" value="ECO:0007669"/>
    <property type="project" value="UniProtKB-KW"/>
</dbReference>
<accession>Q9K6W2</accession>
<sequence>MSSLEQLSQLTNDLYAKVHAPLDSNHDLREKQMENIEQLLKERALVMEMGLERPKDQKSKQIVREILMKSQAIQEKLAEMSGMIHQEINQFKQKKQMNRKYDLPYDGPTVEGVFFDKRE</sequence>
<feature type="chain" id="PRO_0000353906" description="Flagellar protein FliT">
    <location>
        <begin position="1"/>
        <end position="119"/>
    </location>
</feature>
<gene>
    <name type="primary">fliT</name>
    <name type="ordered locus">BH3612</name>
</gene>
<proteinExistence type="inferred from homology"/>
<evidence type="ECO:0000250" key="1"/>
<evidence type="ECO:0000305" key="2"/>
<organism>
    <name type="scientific">Halalkalibacterium halodurans (strain ATCC BAA-125 / DSM 18197 / FERM 7344 / JCM 9153 / C-125)</name>
    <name type="common">Bacillus halodurans</name>
    <dbReference type="NCBI Taxonomy" id="272558"/>
    <lineage>
        <taxon>Bacteria</taxon>
        <taxon>Bacillati</taxon>
        <taxon>Bacillota</taxon>
        <taxon>Bacilli</taxon>
        <taxon>Bacillales</taxon>
        <taxon>Bacillaceae</taxon>
        <taxon>Halalkalibacterium (ex Joshi et al. 2022)</taxon>
    </lineage>
</organism>